<evidence type="ECO:0000250" key="1">
    <source>
        <dbReference type="UniProtKB" id="Q66K64"/>
    </source>
</evidence>
<evidence type="ECO:0000256" key="2">
    <source>
        <dbReference type="SAM" id="MobiDB-lite"/>
    </source>
</evidence>
<evidence type="ECO:0000303" key="3">
    <source>
    </source>
</evidence>
<evidence type="ECO:0000305" key="4"/>
<evidence type="ECO:0000312" key="5">
    <source>
        <dbReference type="MGI" id="MGI:2684420"/>
    </source>
</evidence>
<dbReference type="EMBL" id="BC057552">
    <property type="protein sequence ID" value="AAH57552.1"/>
    <property type="molecule type" value="mRNA"/>
</dbReference>
<dbReference type="EMBL" id="AK032982">
    <property type="protein sequence ID" value="BAC28110.1"/>
    <property type="molecule type" value="mRNA"/>
</dbReference>
<dbReference type="EMBL" id="AK153305">
    <property type="protein sequence ID" value="BAE31886.1"/>
    <property type="molecule type" value="mRNA"/>
</dbReference>
<dbReference type="EMBL" id="AK155000">
    <property type="protein sequence ID" value="BAE32985.1"/>
    <property type="molecule type" value="mRNA"/>
</dbReference>
<dbReference type="CCDS" id="CCDS40406.1">
    <molecule id="Q6PFH3-2"/>
</dbReference>
<dbReference type="CCDS" id="CCDS90424.1">
    <molecule id="Q6PFH3-1"/>
</dbReference>
<dbReference type="RefSeq" id="NP_001344251.1">
    <molecule id="Q6PFH3-1"/>
    <property type="nucleotide sequence ID" value="NM_001357322.1"/>
</dbReference>
<dbReference type="RefSeq" id="NP_766090.2">
    <molecule id="Q6PFH3-2"/>
    <property type="nucleotide sequence ID" value="NM_172502.4"/>
</dbReference>
<dbReference type="RefSeq" id="XP_006530871.1">
    <property type="nucleotide sequence ID" value="XM_006530808.1"/>
</dbReference>
<dbReference type="SMR" id="Q6PFH3"/>
<dbReference type="BioGRID" id="229292">
    <property type="interactions" value="1"/>
</dbReference>
<dbReference type="FunCoup" id="Q6PFH3">
    <property type="interactions" value="350"/>
</dbReference>
<dbReference type="STRING" id="10090.ENSMUSP00000038568"/>
<dbReference type="iPTMnet" id="Q6PFH3"/>
<dbReference type="PhosphoSitePlus" id="Q6PFH3"/>
<dbReference type="PaxDb" id="10090-ENSMUSP00000038568"/>
<dbReference type="PeptideAtlas" id="Q6PFH3"/>
<dbReference type="ProteomicsDB" id="279280">
    <molecule id="Q6PFH3-1"/>
</dbReference>
<dbReference type="ProteomicsDB" id="279281">
    <molecule id="Q6PFH3-2"/>
</dbReference>
<dbReference type="Antibodypedia" id="77450">
    <property type="antibodies" value="3 antibodies from 3 providers"/>
</dbReference>
<dbReference type="Ensembl" id="ENSMUST00000041367.9">
    <molecule id="Q6PFH3-2"/>
    <property type="protein sequence ID" value="ENSMUSP00000038568.8"/>
    <property type="gene ID" value="ENSMUSG00000037103.9"/>
</dbReference>
<dbReference type="Ensembl" id="ENSMUST00000210279.2">
    <molecule id="Q6PFH3-1"/>
    <property type="protein sequence ID" value="ENSMUSP00000147690.2"/>
    <property type="gene ID" value="ENSMUSG00000037103.9"/>
</dbReference>
<dbReference type="GeneID" id="212123"/>
<dbReference type="KEGG" id="mmu:212123"/>
<dbReference type="UCSC" id="uc009mlw.1">
    <molecule id="Q6PFH3-2"/>
    <property type="organism name" value="mouse"/>
</dbReference>
<dbReference type="UCSC" id="uc009mlx.1">
    <molecule id="Q6PFH3-1"/>
    <property type="organism name" value="mouse"/>
</dbReference>
<dbReference type="AGR" id="MGI:2684420"/>
<dbReference type="CTD" id="90379"/>
<dbReference type="MGI" id="MGI:2684420">
    <property type="gene designation" value="Dcaf15"/>
</dbReference>
<dbReference type="VEuPathDB" id="HostDB:ENSMUSG00000037103"/>
<dbReference type="eggNOG" id="ENOG502QQCQ">
    <property type="taxonomic scope" value="Eukaryota"/>
</dbReference>
<dbReference type="GeneTree" id="ENSGT00390000011987"/>
<dbReference type="HOGENOM" id="CLU_031970_0_0_1"/>
<dbReference type="InParanoid" id="Q6PFH3"/>
<dbReference type="OMA" id="QILYTKG"/>
<dbReference type="OrthoDB" id="52777at9989"/>
<dbReference type="PhylomeDB" id="Q6PFH3"/>
<dbReference type="TreeFam" id="TF329680"/>
<dbReference type="UniPathway" id="UPA00143"/>
<dbReference type="BioGRID-ORCS" id="212123">
    <property type="hits" value="2 hits in 45 CRISPR screens"/>
</dbReference>
<dbReference type="PRO" id="PR:Q6PFH3"/>
<dbReference type="Proteomes" id="UP000000589">
    <property type="component" value="Chromosome 8"/>
</dbReference>
<dbReference type="RNAct" id="Q6PFH3">
    <property type="molecule type" value="protein"/>
</dbReference>
<dbReference type="Bgee" id="ENSMUSG00000037103">
    <property type="expression patterns" value="Expressed in ear vesicle and 245 other cell types or tissues"/>
</dbReference>
<dbReference type="ExpressionAtlas" id="Q6PFH3">
    <property type="expression patterns" value="baseline and differential"/>
</dbReference>
<dbReference type="GO" id="GO:0080008">
    <property type="term" value="C:Cul4-RING E3 ubiquitin ligase complex"/>
    <property type="evidence" value="ECO:0000250"/>
    <property type="project" value="UniProtKB"/>
</dbReference>
<dbReference type="GO" id="GO:0046872">
    <property type="term" value="F:metal ion binding"/>
    <property type="evidence" value="ECO:0007669"/>
    <property type="project" value="UniProtKB-KW"/>
</dbReference>
<dbReference type="GO" id="GO:0002376">
    <property type="term" value="P:immune system process"/>
    <property type="evidence" value="ECO:0007669"/>
    <property type="project" value="UniProtKB-KW"/>
</dbReference>
<dbReference type="GO" id="GO:0000209">
    <property type="term" value="P:protein polyubiquitination"/>
    <property type="evidence" value="ECO:0000250"/>
    <property type="project" value="UniProtKB"/>
</dbReference>
<dbReference type="GO" id="GO:0032814">
    <property type="term" value="P:regulation of natural killer cell activation"/>
    <property type="evidence" value="ECO:0000250"/>
    <property type="project" value="UniProtKB"/>
</dbReference>
<dbReference type="CDD" id="cd20913">
    <property type="entry name" value="DCAF15-CTD"/>
    <property type="match status" value="1"/>
</dbReference>
<dbReference type="CDD" id="cd20917">
    <property type="entry name" value="DCAF15-NTD"/>
    <property type="match status" value="1"/>
</dbReference>
<dbReference type="InterPro" id="IPR038914">
    <property type="entry name" value="DCAF15"/>
</dbReference>
<dbReference type="InterPro" id="IPR047319">
    <property type="entry name" value="DCAF15_C"/>
</dbReference>
<dbReference type="InterPro" id="IPR032734">
    <property type="entry name" value="DCAF15_WD40"/>
</dbReference>
<dbReference type="PANTHER" id="PTHR28541">
    <property type="entry name" value="DDB1- AND CUL4-ASSOCIATED FACTOR 15"/>
    <property type="match status" value="1"/>
</dbReference>
<dbReference type="PANTHER" id="PTHR28541:SF1">
    <property type="entry name" value="DDB1- AND CUL4-ASSOCIATED FACTOR 15"/>
    <property type="match status" value="1"/>
</dbReference>
<dbReference type="Pfam" id="PF14939">
    <property type="entry name" value="DCAF15_WD40"/>
    <property type="match status" value="1"/>
</dbReference>
<comment type="function">
    <text evidence="1">Substrate-recognition component of the DCX(DCAF15) complex, a cullin-4-RING E3 ubiquitin-protein ligase complex that mediates ubiquitination and degradation of target proteins. The DCX(DCAF15) complex acts as a regulator of the natural killer (NK) cells effector functions, possibly by mediating ubiquitination and degradation of cohesin subunits SMC1A and SMC3. May play a role in the activation of antigen-presenting cells (APC) and their interaction with NK cells.</text>
</comment>
<comment type="pathway">
    <text evidence="1">Protein modification; protein ubiquitination.</text>
</comment>
<comment type="subunit">
    <text evidence="1">Component of the DCX(DCAF15) complex, also named CLR4(DCAF15) complex, composed of DCAF15, DDB1, cullin-4 (CUL4A or CUL4B), DDA1 and RBX1.</text>
</comment>
<comment type="alternative products">
    <event type="alternative splicing"/>
    <isoform>
        <id>Q6PFH3-1</id>
        <name>1</name>
        <sequence type="displayed"/>
    </isoform>
    <isoform>
        <id>Q6PFH3-2</id>
        <name>2</name>
        <sequence type="described" ref="VSP_030290"/>
    </isoform>
</comment>
<gene>
    <name evidence="5" type="primary">Dcaf15</name>
</gene>
<accession>Q6PFH3</accession>
<accession>Q3U305</accession>
<accession>Q8BMB2</accession>
<organism>
    <name type="scientific">Mus musculus</name>
    <name type="common">Mouse</name>
    <dbReference type="NCBI Taxonomy" id="10090"/>
    <lineage>
        <taxon>Eukaryota</taxon>
        <taxon>Metazoa</taxon>
        <taxon>Chordata</taxon>
        <taxon>Craniata</taxon>
        <taxon>Vertebrata</taxon>
        <taxon>Euteleostomi</taxon>
        <taxon>Mammalia</taxon>
        <taxon>Eutheria</taxon>
        <taxon>Euarchontoglires</taxon>
        <taxon>Glires</taxon>
        <taxon>Rodentia</taxon>
        <taxon>Myomorpha</taxon>
        <taxon>Muroidea</taxon>
        <taxon>Muridae</taxon>
        <taxon>Murinae</taxon>
        <taxon>Mus</taxon>
        <taxon>Mus</taxon>
    </lineage>
</organism>
<sequence>MAPSSKSERNSGAGSAGGGPGGTGGKRAVGRRREHVLKQLERVKISGQLSPRLFRKLPPRVCVSLKNIVDEDFLYAGHIFLGFSKCGRYVLSYTSSSGDDDFSFYIYHLYWWEFNVHSKLKLVRQVRLFQDEEIYSDLYLTVCEWPSDASKVIVFGFNTRSANGMLMNMMMMSDENHRDIYISTVAVPPRGRCAACQDASRAHPGDPSAQCLRHGFMLHTKYQVVYPFPTFQPAFQLKKDQVVLLNTSYSLVACAVSVHSAGDSSFCQILYDHTALPPAPPSSPGPWSPEAAPAFPSLGVEVVPAQPSGAPEPSPAIAKAKEFVADIFRRAKEAKGSPLEETRLPSSLGPSSSRCRPSLEPQAPSGEVVPRDSPPAAETTAPEPGYINYTKLHYVLQSGEGTEPEDEFEDDKISLPFVVTDLRGRNLRPMRERTDMQGQYLTVEQLTLDFEYVINEVIRHDATWGHQFCSFSDYDIVILEVCPETNQVLINIGLLLLAFPAPTEEGQLRPKTYHTSLKVAWDLNTGIFETVSVGDLTEVKGQTSGSVWSSYRKSCVDMVMKWLVPESSGRYVNRMTNEALHKGCSLKVLADSERYTWIVL</sequence>
<keyword id="KW-0025">Alternative splicing</keyword>
<keyword id="KW-0391">Immunity</keyword>
<keyword id="KW-0479">Metal-binding</keyword>
<keyword id="KW-0597">Phosphoprotein</keyword>
<keyword id="KW-1185">Reference proteome</keyword>
<keyword id="KW-0833">Ubl conjugation pathway</keyword>
<keyword id="KW-0862">Zinc</keyword>
<reference key="1">
    <citation type="journal article" date="2005" name="Science">
        <title>The transcriptional landscape of the mammalian genome.</title>
        <authorList>
            <person name="Carninci P."/>
            <person name="Kasukawa T."/>
            <person name="Katayama S."/>
            <person name="Gough J."/>
            <person name="Frith M.C."/>
            <person name="Maeda N."/>
            <person name="Oyama R."/>
            <person name="Ravasi T."/>
            <person name="Lenhard B."/>
            <person name="Wells C."/>
            <person name="Kodzius R."/>
            <person name="Shimokawa K."/>
            <person name="Bajic V.B."/>
            <person name="Brenner S.E."/>
            <person name="Batalov S."/>
            <person name="Forrest A.R."/>
            <person name="Zavolan M."/>
            <person name="Davis M.J."/>
            <person name="Wilming L.G."/>
            <person name="Aidinis V."/>
            <person name="Allen J.E."/>
            <person name="Ambesi-Impiombato A."/>
            <person name="Apweiler R."/>
            <person name="Aturaliya R.N."/>
            <person name="Bailey T.L."/>
            <person name="Bansal M."/>
            <person name="Baxter L."/>
            <person name="Beisel K.W."/>
            <person name="Bersano T."/>
            <person name="Bono H."/>
            <person name="Chalk A.M."/>
            <person name="Chiu K.P."/>
            <person name="Choudhary V."/>
            <person name="Christoffels A."/>
            <person name="Clutterbuck D.R."/>
            <person name="Crowe M.L."/>
            <person name="Dalla E."/>
            <person name="Dalrymple B.P."/>
            <person name="de Bono B."/>
            <person name="Della Gatta G."/>
            <person name="di Bernardo D."/>
            <person name="Down T."/>
            <person name="Engstrom P."/>
            <person name="Fagiolini M."/>
            <person name="Faulkner G."/>
            <person name="Fletcher C.F."/>
            <person name="Fukushima T."/>
            <person name="Furuno M."/>
            <person name="Futaki S."/>
            <person name="Gariboldi M."/>
            <person name="Georgii-Hemming P."/>
            <person name="Gingeras T.R."/>
            <person name="Gojobori T."/>
            <person name="Green R.E."/>
            <person name="Gustincich S."/>
            <person name="Harbers M."/>
            <person name="Hayashi Y."/>
            <person name="Hensch T.K."/>
            <person name="Hirokawa N."/>
            <person name="Hill D."/>
            <person name="Huminiecki L."/>
            <person name="Iacono M."/>
            <person name="Ikeo K."/>
            <person name="Iwama A."/>
            <person name="Ishikawa T."/>
            <person name="Jakt M."/>
            <person name="Kanapin A."/>
            <person name="Katoh M."/>
            <person name="Kawasawa Y."/>
            <person name="Kelso J."/>
            <person name="Kitamura H."/>
            <person name="Kitano H."/>
            <person name="Kollias G."/>
            <person name="Krishnan S.P."/>
            <person name="Kruger A."/>
            <person name="Kummerfeld S.K."/>
            <person name="Kurochkin I.V."/>
            <person name="Lareau L.F."/>
            <person name="Lazarevic D."/>
            <person name="Lipovich L."/>
            <person name="Liu J."/>
            <person name="Liuni S."/>
            <person name="McWilliam S."/>
            <person name="Madan Babu M."/>
            <person name="Madera M."/>
            <person name="Marchionni L."/>
            <person name="Matsuda H."/>
            <person name="Matsuzawa S."/>
            <person name="Miki H."/>
            <person name="Mignone F."/>
            <person name="Miyake S."/>
            <person name="Morris K."/>
            <person name="Mottagui-Tabar S."/>
            <person name="Mulder N."/>
            <person name="Nakano N."/>
            <person name="Nakauchi H."/>
            <person name="Ng P."/>
            <person name="Nilsson R."/>
            <person name="Nishiguchi S."/>
            <person name="Nishikawa S."/>
            <person name="Nori F."/>
            <person name="Ohara O."/>
            <person name="Okazaki Y."/>
            <person name="Orlando V."/>
            <person name="Pang K.C."/>
            <person name="Pavan W.J."/>
            <person name="Pavesi G."/>
            <person name="Pesole G."/>
            <person name="Petrovsky N."/>
            <person name="Piazza S."/>
            <person name="Reed J."/>
            <person name="Reid J.F."/>
            <person name="Ring B.Z."/>
            <person name="Ringwald M."/>
            <person name="Rost B."/>
            <person name="Ruan Y."/>
            <person name="Salzberg S.L."/>
            <person name="Sandelin A."/>
            <person name="Schneider C."/>
            <person name="Schoenbach C."/>
            <person name="Sekiguchi K."/>
            <person name="Semple C.A."/>
            <person name="Seno S."/>
            <person name="Sessa L."/>
            <person name="Sheng Y."/>
            <person name="Shibata Y."/>
            <person name="Shimada H."/>
            <person name="Shimada K."/>
            <person name="Silva D."/>
            <person name="Sinclair B."/>
            <person name="Sperling S."/>
            <person name="Stupka E."/>
            <person name="Sugiura K."/>
            <person name="Sultana R."/>
            <person name="Takenaka Y."/>
            <person name="Taki K."/>
            <person name="Tammoja K."/>
            <person name="Tan S.L."/>
            <person name="Tang S."/>
            <person name="Taylor M.S."/>
            <person name="Tegner J."/>
            <person name="Teichmann S.A."/>
            <person name="Ueda H.R."/>
            <person name="van Nimwegen E."/>
            <person name="Verardo R."/>
            <person name="Wei C.L."/>
            <person name="Yagi K."/>
            <person name="Yamanishi H."/>
            <person name="Zabarovsky E."/>
            <person name="Zhu S."/>
            <person name="Zimmer A."/>
            <person name="Hide W."/>
            <person name="Bult C."/>
            <person name="Grimmond S.M."/>
            <person name="Teasdale R.D."/>
            <person name="Liu E.T."/>
            <person name="Brusic V."/>
            <person name="Quackenbush J."/>
            <person name="Wahlestedt C."/>
            <person name="Mattick J.S."/>
            <person name="Hume D.A."/>
            <person name="Kai C."/>
            <person name="Sasaki D."/>
            <person name="Tomaru Y."/>
            <person name="Fukuda S."/>
            <person name="Kanamori-Katayama M."/>
            <person name="Suzuki M."/>
            <person name="Aoki J."/>
            <person name="Arakawa T."/>
            <person name="Iida J."/>
            <person name="Imamura K."/>
            <person name="Itoh M."/>
            <person name="Kato T."/>
            <person name="Kawaji H."/>
            <person name="Kawagashira N."/>
            <person name="Kawashima T."/>
            <person name="Kojima M."/>
            <person name="Kondo S."/>
            <person name="Konno H."/>
            <person name="Nakano K."/>
            <person name="Ninomiya N."/>
            <person name="Nishio T."/>
            <person name="Okada M."/>
            <person name="Plessy C."/>
            <person name="Shibata K."/>
            <person name="Shiraki T."/>
            <person name="Suzuki S."/>
            <person name="Tagami M."/>
            <person name="Waki K."/>
            <person name="Watahiki A."/>
            <person name="Okamura-Oho Y."/>
            <person name="Suzuki H."/>
            <person name="Kawai J."/>
            <person name="Hayashizaki Y."/>
        </authorList>
    </citation>
    <scope>NUCLEOTIDE SEQUENCE [LARGE SCALE MRNA] (ISOFORMS 1 AND 2)</scope>
    <source>
        <strain>C57BL/6J</strain>
        <strain>NOD</strain>
        <tissue>Bone marrow</tissue>
        <tissue>Wolffian duct</tissue>
    </source>
</reference>
<reference key="2">
    <citation type="journal article" date="2004" name="Genome Res.">
        <title>The status, quality, and expansion of the NIH full-length cDNA project: the Mammalian Gene Collection (MGC).</title>
        <authorList>
            <consortium name="The MGC Project Team"/>
        </authorList>
    </citation>
    <scope>NUCLEOTIDE SEQUENCE [LARGE SCALE MRNA] (ISOFORM 1)</scope>
    <source>
        <strain>C57BL/6J</strain>
        <tissue>Brain</tissue>
    </source>
</reference>
<protein>
    <recommendedName>
        <fullName evidence="4">DDB1- and CUL4-associated factor 15</fullName>
    </recommendedName>
</protein>
<feature type="chain" id="PRO_0000314486" description="DDB1- and CUL4-associated factor 15">
    <location>
        <begin position="1"/>
        <end position="600"/>
    </location>
</feature>
<feature type="region of interest" description="Disordered" evidence="2">
    <location>
        <begin position="1"/>
        <end position="29"/>
    </location>
</feature>
<feature type="region of interest" description="Disordered" evidence="2">
    <location>
        <begin position="334"/>
        <end position="384"/>
    </location>
</feature>
<feature type="compositionally biased region" description="Gly residues" evidence="2">
    <location>
        <begin position="14"/>
        <end position="27"/>
    </location>
</feature>
<feature type="compositionally biased region" description="Basic and acidic residues" evidence="2">
    <location>
        <begin position="334"/>
        <end position="343"/>
    </location>
</feature>
<feature type="compositionally biased region" description="Low complexity" evidence="2">
    <location>
        <begin position="344"/>
        <end position="359"/>
    </location>
</feature>
<feature type="compositionally biased region" description="Low complexity" evidence="2">
    <location>
        <begin position="374"/>
        <end position="384"/>
    </location>
</feature>
<feature type="binding site" evidence="1">
    <location>
        <position position="193"/>
    </location>
    <ligand>
        <name>Zn(2+)</name>
        <dbReference type="ChEBI" id="CHEBI:29105"/>
    </ligand>
</feature>
<feature type="binding site" evidence="1">
    <location>
        <position position="196"/>
    </location>
    <ligand>
        <name>Zn(2+)</name>
        <dbReference type="ChEBI" id="CHEBI:29105"/>
    </ligand>
</feature>
<feature type="binding site" evidence="1">
    <location>
        <position position="211"/>
    </location>
    <ligand>
        <name>Zn(2+)</name>
        <dbReference type="ChEBI" id="CHEBI:29105"/>
    </ligand>
</feature>
<feature type="binding site" evidence="1">
    <location>
        <position position="214"/>
    </location>
    <ligand>
        <name>Zn(2+)</name>
        <dbReference type="ChEBI" id="CHEBI:29105"/>
    </ligand>
</feature>
<feature type="modified residue" description="Phosphoserine" evidence="1">
    <location>
        <position position="50"/>
    </location>
</feature>
<feature type="modified residue" description="Phosphoserine" evidence="1">
    <location>
        <position position="314"/>
    </location>
</feature>
<feature type="splice variant" id="VSP_030290" description="In isoform 2." evidence="3">
    <original>G</original>
    <variation>GRKCPSWAGHLILPWIPGMLDVRSVLGSEWHPAMAGEAG</variation>
    <location>
        <position position="583"/>
    </location>
</feature>
<feature type="sequence conflict" description="In Ref. 1; BAC28110." evidence="4" ref="1">
    <original>H</original>
    <variation>N</variation>
    <location>
        <position position="203"/>
    </location>
</feature>
<name>DCA15_MOUSE</name>
<proteinExistence type="evidence at transcript level"/>